<organism>
    <name type="scientific">Oryza sativa subsp. japonica</name>
    <name type="common">Rice</name>
    <dbReference type="NCBI Taxonomy" id="39947"/>
    <lineage>
        <taxon>Eukaryota</taxon>
        <taxon>Viridiplantae</taxon>
        <taxon>Streptophyta</taxon>
        <taxon>Embryophyta</taxon>
        <taxon>Tracheophyta</taxon>
        <taxon>Spermatophyta</taxon>
        <taxon>Magnoliopsida</taxon>
        <taxon>Liliopsida</taxon>
        <taxon>Poales</taxon>
        <taxon>Poaceae</taxon>
        <taxon>BOP clade</taxon>
        <taxon>Oryzoideae</taxon>
        <taxon>Oryzeae</taxon>
        <taxon>Oryzinae</taxon>
        <taxon>Oryza</taxon>
        <taxon>Oryza sativa</taxon>
    </lineage>
</organism>
<keyword id="KW-0052">Apoplast</keyword>
<keyword id="KW-0325">Glycoprotein</keyword>
<keyword id="KW-0326">Glycosidase</keyword>
<keyword id="KW-0378">Hydrolase</keyword>
<keyword id="KW-1185">Reference proteome</keyword>
<keyword id="KW-0964">Secreted</keyword>
<keyword id="KW-0732">Signal</keyword>
<proteinExistence type="evidence at transcript level"/>
<protein>
    <recommendedName>
        <fullName>Beta-galactosidase 15</fullName>
        <shortName>Lactase 15</shortName>
        <ecNumber>3.2.1.23</ecNumber>
    </recommendedName>
</protein>
<comment type="catalytic activity">
    <reaction>
        <text>Hydrolysis of terminal non-reducing beta-D-galactose residues in beta-D-galactosides.</text>
        <dbReference type="EC" id="3.2.1.23"/>
    </reaction>
</comment>
<comment type="subcellular location">
    <subcellularLocation>
        <location evidence="3">Secreted</location>
        <location evidence="3">Extracellular space</location>
        <location evidence="3">Apoplast</location>
    </subcellularLocation>
</comment>
<comment type="similarity">
    <text evidence="3">Belongs to the glycosyl hydrolase 35 family.</text>
</comment>
<comment type="sequence caution" evidence="3">
    <conflict type="erroneous gene model prediction">
        <sequence resource="EMBL-CDS" id="ABA97655"/>
    </conflict>
</comment>
<accession>Q0INM3</accession>
<accession>A0A0P0Y9M8</accession>
<accession>Q2QSG5</accession>
<evidence type="ECO:0000255" key="1"/>
<evidence type="ECO:0000255" key="2">
    <source>
        <dbReference type="PROSITE-ProRule" id="PRU00260"/>
    </source>
</evidence>
<evidence type="ECO:0000305" key="3"/>
<feature type="signal peptide" evidence="1">
    <location>
        <begin position="1"/>
        <end position="31"/>
    </location>
</feature>
<feature type="chain" id="PRO_0000294167" description="Beta-galactosidase 15">
    <location>
        <begin position="32"/>
        <end position="919"/>
    </location>
</feature>
<feature type="domain" description="SUEL-type lectin" evidence="2">
    <location>
        <begin position="822"/>
        <end position="907"/>
    </location>
</feature>
<feature type="active site" description="Proton donor" evidence="1">
    <location>
        <position position="220"/>
    </location>
</feature>
<feature type="active site" description="Nucleophile" evidence="1">
    <location>
        <position position="289"/>
    </location>
</feature>
<feature type="glycosylation site" description="N-linked (GlcNAc...) asparagine" evidence="1">
    <location>
        <position position="63"/>
    </location>
</feature>
<feature type="glycosylation site" description="N-linked (GlcNAc...) asparagine" evidence="1">
    <location>
        <position position="412"/>
    </location>
</feature>
<feature type="glycosylation site" description="N-linked (GlcNAc...) asparagine" evidence="1">
    <location>
        <position position="530"/>
    </location>
</feature>
<feature type="glycosylation site" description="N-linked (GlcNAc...) asparagine" evidence="1">
    <location>
        <position position="546"/>
    </location>
</feature>
<feature type="glycosylation site" description="N-linked (GlcNAc...) asparagine" evidence="1">
    <location>
        <position position="855"/>
    </location>
</feature>
<reference key="1">
    <citation type="journal article" date="2005" name="BMC Biol.">
        <title>The sequence of rice chromosomes 11 and 12, rich in disease resistance genes and recent gene duplications.</title>
        <authorList>
            <consortium name="The rice chromosomes 11 and 12 sequencing consortia"/>
        </authorList>
    </citation>
    <scope>NUCLEOTIDE SEQUENCE [LARGE SCALE GENOMIC DNA]</scope>
    <source>
        <strain>cv. Nipponbare</strain>
    </source>
</reference>
<reference key="2">
    <citation type="journal article" date="2005" name="Nature">
        <title>The map-based sequence of the rice genome.</title>
        <authorList>
            <consortium name="International rice genome sequencing project (IRGSP)"/>
        </authorList>
    </citation>
    <scope>NUCLEOTIDE SEQUENCE [LARGE SCALE GENOMIC DNA]</scope>
    <source>
        <strain>cv. Nipponbare</strain>
    </source>
</reference>
<reference key="3">
    <citation type="journal article" date="2008" name="Nucleic Acids Res.">
        <title>The rice annotation project database (RAP-DB): 2008 update.</title>
        <authorList>
            <consortium name="The rice annotation project (RAP)"/>
        </authorList>
    </citation>
    <scope>GENOME REANNOTATION</scope>
    <source>
        <strain>cv. Nipponbare</strain>
    </source>
</reference>
<reference key="4">
    <citation type="journal article" date="2013" name="Rice">
        <title>Improvement of the Oryza sativa Nipponbare reference genome using next generation sequence and optical map data.</title>
        <authorList>
            <person name="Kawahara Y."/>
            <person name="de la Bastide M."/>
            <person name="Hamilton J.P."/>
            <person name="Kanamori H."/>
            <person name="McCombie W.R."/>
            <person name="Ouyang S."/>
            <person name="Schwartz D.C."/>
            <person name="Tanaka T."/>
            <person name="Wu J."/>
            <person name="Zhou S."/>
            <person name="Childs K.L."/>
            <person name="Davidson R.M."/>
            <person name="Lin H."/>
            <person name="Quesada-Ocampo L."/>
            <person name="Vaillancourt B."/>
            <person name="Sakai H."/>
            <person name="Lee S.S."/>
            <person name="Kim J."/>
            <person name="Numa H."/>
            <person name="Itoh T."/>
            <person name="Buell C.R."/>
            <person name="Matsumoto T."/>
        </authorList>
    </citation>
    <scope>GENOME REANNOTATION</scope>
    <source>
        <strain>cv. Nipponbare</strain>
    </source>
</reference>
<reference key="5">
    <citation type="journal article" date="2003" name="Science">
        <title>Collection, mapping, and annotation of over 28,000 cDNA clones from japonica rice.</title>
        <authorList>
            <consortium name="The rice full-length cDNA consortium"/>
        </authorList>
    </citation>
    <scope>NUCLEOTIDE SEQUENCE [LARGE SCALE MRNA]</scope>
    <source>
        <strain>cv. Nipponbare</strain>
    </source>
</reference>
<dbReference type="EC" id="3.2.1.23"/>
<dbReference type="EMBL" id="DP000011">
    <property type="protein sequence ID" value="ABA97655.2"/>
    <property type="status" value="ALT_SEQ"/>
    <property type="molecule type" value="Genomic_DNA"/>
</dbReference>
<dbReference type="EMBL" id="AP008218">
    <property type="protein sequence ID" value="BAF29692.1"/>
    <property type="molecule type" value="Genomic_DNA"/>
</dbReference>
<dbReference type="EMBL" id="AP014968">
    <property type="protein sequence ID" value="BAT16936.1"/>
    <property type="molecule type" value="Genomic_DNA"/>
</dbReference>
<dbReference type="EMBL" id="AK065546">
    <property type="status" value="NOT_ANNOTATED_CDS"/>
    <property type="molecule type" value="mRNA"/>
</dbReference>
<dbReference type="SMR" id="Q0INM3"/>
<dbReference type="FunCoup" id="Q0INM3">
    <property type="interactions" value="622"/>
</dbReference>
<dbReference type="STRING" id="39947.Q0INM3"/>
<dbReference type="CAZy" id="GH35">
    <property type="family name" value="Glycoside Hydrolase Family 35"/>
</dbReference>
<dbReference type="PaxDb" id="39947-Q0INM3"/>
<dbReference type="EnsemblPlants" id="Os12t0429200-01">
    <property type="protein sequence ID" value="Os12t0429200-01"/>
    <property type="gene ID" value="Os12g0429200"/>
</dbReference>
<dbReference type="Gramene" id="Os12t0429200-01">
    <property type="protein sequence ID" value="Os12t0429200-01"/>
    <property type="gene ID" value="Os12g0429200"/>
</dbReference>
<dbReference type="KEGG" id="dosa:Os12g0429200"/>
<dbReference type="eggNOG" id="KOG0496">
    <property type="taxonomic scope" value="Eukaryota"/>
</dbReference>
<dbReference type="HOGENOM" id="CLU_007853_4_0_1"/>
<dbReference type="InParanoid" id="Q0INM3"/>
<dbReference type="OMA" id="KETIGTW"/>
<dbReference type="Proteomes" id="UP000000763">
    <property type="component" value="Chromosome 12"/>
</dbReference>
<dbReference type="Proteomes" id="UP000059680">
    <property type="component" value="Chromosome 12"/>
</dbReference>
<dbReference type="GO" id="GO:0048046">
    <property type="term" value="C:apoplast"/>
    <property type="evidence" value="ECO:0007669"/>
    <property type="project" value="UniProtKB-SubCell"/>
</dbReference>
<dbReference type="GO" id="GO:0009505">
    <property type="term" value="C:plant-type cell wall"/>
    <property type="evidence" value="ECO:0000318"/>
    <property type="project" value="GO_Central"/>
</dbReference>
<dbReference type="GO" id="GO:0005773">
    <property type="term" value="C:vacuole"/>
    <property type="evidence" value="ECO:0000318"/>
    <property type="project" value="GO_Central"/>
</dbReference>
<dbReference type="GO" id="GO:0004565">
    <property type="term" value="F:beta-galactosidase activity"/>
    <property type="evidence" value="ECO:0000318"/>
    <property type="project" value="GO_Central"/>
</dbReference>
<dbReference type="GO" id="GO:0030246">
    <property type="term" value="F:carbohydrate binding"/>
    <property type="evidence" value="ECO:0007669"/>
    <property type="project" value="InterPro"/>
</dbReference>
<dbReference type="GO" id="GO:0019388">
    <property type="term" value="P:galactose catabolic process"/>
    <property type="evidence" value="ECO:0000318"/>
    <property type="project" value="GO_Central"/>
</dbReference>
<dbReference type="GO" id="GO:0009827">
    <property type="term" value="P:plant-type cell wall modification"/>
    <property type="evidence" value="ECO:0000318"/>
    <property type="project" value="GO_Central"/>
</dbReference>
<dbReference type="CDD" id="cd22842">
    <property type="entry name" value="Gal_Rha_Lectin_BGal"/>
    <property type="match status" value="1"/>
</dbReference>
<dbReference type="FunFam" id="2.60.120.260:FF:000076">
    <property type="entry name" value="Beta-galactosidase"/>
    <property type="match status" value="1"/>
</dbReference>
<dbReference type="FunFam" id="2.60.120.260:FF:000107">
    <property type="entry name" value="Beta-galactosidase"/>
    <property type="match status" value="1"/>
</dbReference>
<dbReference type="FunFam" id="2.60.120.260:FF:000142">
    <property type="entry name" value="Beta-galactosidase"/>
    <property type="match status" value="1"/>
</dbReference>
<dbReference type="FunFam" id="2.60.120.740:FF:000002">
    <property type="entry name" value="Beta-galactosidase"/>
    <property type="match status" value="1"/>
</dbReference>
<dbReference type="FunFam" id="3.20.20.80:FF:000006">
    <property type="entry name" value="Beta-galactosidase"/>
    <property type="match status" value="1"/>
</dbReference>
<dbReference type="Gene3D" id="2.60.120.740">
    <property type="match status" value="1"/>
</dbReference>
<dbReference type="Gene3D" id="2.60.120.260">
    <property type="entry name" value="Galactose-binding domain-like"/>
    <property type="match status" value="2"/>
</dbReference>
<dbReference type="Gene3D" id="3.20.20.80">
    <property type="entry name" value="Glycosidases"/>
    <property type="match status" value="1"/>
</dbReference>
<dbReference type="InterPro" id="IPR048913">
    <property type="entry name" value="BetaGal_gal-bd"/>
</dbReference>
<dbReference type="InterPro" id="IPR008979">
    <property type="entry name" value="Galactose-bd-like_sf"/>
</dbReference>
<dbReference type="InterPro" id="IPR041392">
    <property type="entry name" value="GHD"/>
</dbReference>
<dbReference type="InterPro" id="IPR031330">
    <property type="entry name" value="Gly_Hdrlase_35_cat"/>
</dbReference>
<dbReference type="InterPro" id="IPR019801">
    <property type="entry name" value="Glyco_hydro_35_CS"/>
</dbReference>
<dbReference type="InterPro" id="IPR001944">
    <property type="entry name" value="Glycoside_Hdrlase_35"/>
</dbReference>
<dbReference type="InterPro" id="IPR017853">
    <property type="entry name" value="Glycoside_hydrolase_SF"/>
</dbReference>
<dbReference type="InterPro" id="IPR000922">
    <property type="entry name" value="Lectin_gal-bd_dom"/>
</dbReference>
<dbReference type="InterPro" id="IPR043159">
    <property type="entry name" value="Lectin_gal-bd_sf"/>
</dbReference>
<dbReference type="PANTHER" id="PTHR23421">
    <property type="entry name" value="BETA-GALACTOSIDASE RELATED"/>
    <property type="match status" value="1"/>
</dbReference>
<dbReference type="Pfam" id="PF21467">
    <property type="entry name" value="BetaGal_gal-bd"/>
    <property type="match status" value="1"/>
</dbReference>
<dbReference type="Pfam" id="PF17834">
    <property type="entry name" value="GHD"/>
    <property type="match status" value="1"/>
</dbReference>
<dbReference type="Pfam" id="PF01301">
    <property type="entry name" value="Glyco_hydro_35"/>
    <property type="match status" value="1"/>
</dbReference>
<dbReference type="Pfam" id="PF02140">
    <property type="entry name" value="SUEL_Lectin"/>
    <property type="match status" value="1"/>
</dbReference>
<dbReference type="PRINTS" id="PR00742">
    <property type="entry name" value="GLHYDRLASE35"/>
</dbReference>
<dbReference type="SUPFAM" id="SSF51445">
    <property type="entry name" value="(Trans)glycosidases"/>
    <property type="match status" value="1"/>
</dbReference>
<dbReference type="SUPFAM" id="SSF49785">
    <property type="entry name" value="Galactose-binding domain-like"/>
    <property type="match status" value="2"/>
</dbReference>
<dbReference type="PROSITE" id="PS01182">
    <property type="entry name" value="GLYCOSYL_HYDROL_F35"/>
    <property type="match status" value="1"/>
</dbReference>
<dbReference type="PROSITE" id="PS50228">
    <property type="entry name" value="SUEL_LECTIN"/>
    <property type="match status" value="1"/>
</dbReference>
<gene>
    <name type="ordered locus">Os12g0429200</name>
    <name type="ordered locus">LOC_Os12g24170</name>
</gene>
<name>BGA15_ORYSJ</name>
<sequence>MAASRGPPLLGFRALALALLLAILLLLGCSAAAAYAGAEGVLRQVVGRRGDDGGGGNFFEPFNVTYDHRAVLIGGKRRMLVSAGLHYPRATPEMWPSLIAKCKEGGADVIETYVFWNGHEPAKGQYYFEERFDLVKFAKLVAAEGLFLFLRIGPYACAEWNFGGFPVWLRDIPGIEFRTDNEPFKAEMQTFVTKIVTLMKEEKLYSWQGGPIILQQIENEYGNIQGNYGQAGKRYMQWAAQMAIGLDTGIPWVMCRQTDAPEEIIDTCNAFYCDGFKPNSYNKPTIWTEDWDGWYADWGGALPHRPAEDSAFAVARFYQRGGSLQNYYMYFGGTNFARTAGGPLQITSYDYDAPIDEYGILRQPKWGHLKDLHTAIKLCEPALIAVDGSPQYIKLGSMQEAHVYSTGEVHTNGSMAGNAQICSAFLANIDEHKYASVWIFGKSYSLPPWSVSILPDCENVAFNTARIGAQTSVFTVESGSPSRSSRHKPSILSLTSGGPYLSSTWWTSKETIGTWGGNNFAVQGILEHLNVTKDISDYLWYTTRVNISDADVAFWSSKGVLPSLTIDKIRDVARVFVNGKLAGSQVGHWVSLKQPIQLVEGLNELTLLSEIVGLQNYGAFLEKDGAGFRGQVTLTGLSDGDVDLTNSLWTYQVGLKGEFSMIYAPEKQGCAGWSRMQKDSVQPFTWYKTMFSTPKGTDPVAIDLGSMGKGQAWVNGHLIGRYWSLVAPESGCSSSCYYPGAYNERKCQSNCGMPTQNWYHIPREWLKESDNLLVLFEETGGDPSLISLEAHYAKTVCSRISENYYPPLSAWSHLSSGRASVNAATPELRLQCDDGHVISEITFASYGTPSGGCLNFSKGNCHASSTLDLVTEACVGNTKCAISVSNDVFGDPCRGVLKDLAVEAKCSPPSTTKEPRGEM</sequence>